<name>POLC1_TOBAC</name>
<comment type="allergen">
    <text>Causes an allergic reaction in human.</text>
</comment>
<sequence length="84" mass="9463">MAEDPQDIADRERIFKRFDLNGDGKISSAELGETLKMLGSVTSEEVQHMMAELDTDGDGFISYEEFEEFARANRGLIKDVAKVF</sequence>
<proteinExistence type="evidence at protein level"/>
<feature type="chain" id="PRO_0000073677" description="Polcalcin Nic t 1">
    <location>
        <begin position="1"/>
        <end position="84"/>
    </location>
</feature>
<feature type="domain" description="EF-hand 1" evidence="1">
    <location>
        <begin position="6"/>
        <end position="40"/>
    </location>
</feature>
<feature type="domain" description="EF-hand 2" evidence="1">
    <location>
        <begin position="41"/>
        <end position="76"/>
    </location>
</feature>
<feature type="binding site" evidence="1">
    <location>
        <position position="19"/>
    </location>
    <ligand>
        <name>Ca(2+)</name>
        <dbReference type="ChEBI" id="CHEBI:29108"/>
        <label>1</label>
    </ligand>
</feature>
<feature type="binding site" evidence="1">
    <location>
        <position position="21"/>
    </location>
    <ligand>
        <name>Ca(2+)</name>
        <dbReference type="ChEBI" id="CHEBI:29108"/>
        <label>1</label>
    </ligand>
</feature>
<feature type="binding site" evidence="1">
    <location>
        <position position="23"/>
    </location>
    <ligand>
        <name>Ca(2+)</name>
        <dbReference type="ChEBI" id="CHEBI:29108"/>
        <label>1</label>
    </ligand>
</feature>
<feature type="binding site" evidence="1">
    <location>
        <position position="25"/>
    </location>
    <ligand>
        <name>Ca(2+)</name>
        <dbReference type="ChEBI" id="CHEBI:29108"/>
        <label>1</label>
    </ligand>
</feature>
<feature type="binding site" evidence="1">
    <location>
        <position position="30"/>
    </location>
    <ligand>
        <name>Ca(2+)</name>
        <dbReference type="ChEBI" id="CHEBI:29108"/>
        <label>1</label>
    </ligand>
</feature>
<feature type="binding site" evidence="1">
    <location>
        <position position="54"/>
    </location>
    <ligand>
        <name>Ca(2+)</name>
        <dbReference type="ChEBI" id="CHEBI:29108"/>
        <label>2</label>
    </ligand>
</feature>
<feature type="binding site" evidence="1">
    <location>
        <position position="56"/>
    </location>
    <ligand>
        <name>Ca(2+)</name>
        <dbReference type="ChEBI" id="CHEBI:29108"/>
        <label>2</label>
    </ligand>
</feature>
<feature type="binding site" evidence="1">
    <location>
        <position position="58"/>
    </location>
    <ligand>
        <name>Ca(2+)</name>
        <dbReference type="ChEBI" id="CHEBI:29108"/>
        <label>2</label>
    </ligand>
</feature>
<feature type="binding site" evidence="1">
    <location>
        <position position="65"/>
    </location>
    <ligand>
        <name>Ca(2+)</name>
        <dbReference type="ChEBI" id="CHEBI:29108"/>
        <label>2</label>
    </ligand>
</feature>
<accession>Q8VWY6</accession>
<dbReference type="EMBL" id="AB035706">
    <property type="protein sequence ID" value="BAB82487.1"/>
    <property type="molecule type" value="mRNA"/>
</dbReference>
<dbReference type="RefSeq" id="XP_016510386.1">
    <property type="nucleotide sequence ID" value="XM_016654900.1"/>
</dbReference>
<dbReference type="SMR" id="Q8VWY6"/>
<dbReference type="STRING" id="4097.Q8VWY6"/>
<dbReference type="PaxDb" id="4097-Q8VWY6"/>
<dbReference type="KEGG" id="nta:107827715"/>
<dbReference type="OMA" id="FCHANPG"/>
<dbReference type="OrthoDB" id="26525at2759"/>
<dbReference type="Proteomes" id="UP000084051">
    <property type="component" value="Unplaced"/>
</dbReference>
<dbReference type="GO" id="GO:0005737">
    <property type="term" value="C:cytoplasm"/>
    <property type="evidence" value="ECO:0000318"/>
    <property type="project" value="GO_Central"/>
</dbReference>
<dbReference type="GO" id="GO:0005509">
    <property type="term" value="F:calcium ion binding"/>
    <property type="evidence" value="ECO:0000318"/>
    <property type="project" value="GO_Central"/>
</dbReference>
<dbReference type="GO" id="GO:0030234">
    <property type="term" value="F:enzyme regulator activity"/>
    <property type="evidence" value="ECO:0000318"/>
    <property type="project" value="GO_Central"/>
</dbReference>
<dbReference type="CDD" id="cd00051">
    <property type="entry name" value="EFh"/>
    <property type="match status" value="1"/>
</dbReference>
<dbReference type="FunFam" id="1.10.238.10:FF:000178">
    <property type="entry name" value="Calmodulin-2 A"/>
    <property type="match status" value="1"/>
</dbReference>
<dbReference type="Gene3D" id="1.10.238.10">
    <property type="entry name" value="EF-hand"/>
    <property type="match status" value="1"/>
</dbReference>
<dbReference type="InterPro" id="IPR011992">
    <property type="entry name" value="EF-hand-dom_pair"/>
</dbReference>
<dbReference type="InterPro" id="IPR018247">
    <property type="entry name" value="EF_Hand_1_Ca_BS"/>
</dbReference>
<dbReference type="InterPro" id="IPR002048">
    <property type="entry name" value="EF_hand_dom"/>
</dbReference>
<dbReference type="InterPro" id="IPR039647">
    <property type="entry name" value="EF_hand_pair_protein_CML-like"/>
</dbReference>
<dbReference type="PANTHER" id="PTHR10891">
    <property type="entry name" value="EF-HAND CALCIUM-BINDING DOMAIN CONTAINING PROTEIN"/>
    <property type="match status" value="1"/>
</dbReference>
<dbReference type="Pfam" id="PF13499">
    <property type="entry name" value="EF-hand_7"/>
    <property type="match status" value="1"/>
</dbReference>
<dbReference type="SMART" id="SM00054">
    <property type="entry name" value="EFh"/>
    <property type="match status" value="2"/>
</dbReference>
<dbReference type="SUPFAM" id="SSF47473">
    <property type="entry name" value="EF-hand"/>
    <property type="match status" value="1"/>
</dbReference>
<dbReference type="PROSITE" id="PS00018">
    <property type="entry name" value="EF_HAND_1"/>
    <property type="match status" value="2"/>
</dbReference>
<dbReference type="PROSITE" id="PS50222">
    <property type="entry name" value="EF_HAND_2"/>
    <property type="match status" value="2"/>
</dbReference>
<keyword id="KW-0020">Allergen</keyword>
<keyword id="KW-0106">Calcium</keyword>
<keyword id="KW-0479">Metal-binding</keyword>
<keyword id="KW-1185">Reference proteome</keyword>
<keyword id="KW-0677">Repeat</keyword>
<protein>
    <recommendedName>
        <fullName>Polcalcin Nic t 1</fullName>
    </recommendedName>
    <alternativeName>
        <fullName>Calcium-binding pollen allergen Nic t 1</fullName>
    </alternativeName>
    <allergenName>Nic t 1</allergenName>
</protein>
<reference key="1">
    <citation type="submission" date="1999-12" db="EMBL/GenBank/DDBJ databases">
        <title>Isolation and characterization of pollen-specific calcium-binding protein Nic t 1 and Nic t 2.</title>
        <authorList>
            <person name="Okada T."/>
            <person name="Toriyama K."/>
        </authorList>
    </citation>
    <scope>NUCLEOTIDE SEQUENCE [MRNA]</scope>
    <source>
        <strain>cv. SR1</strain>
        <tissue>Anther</tissue>
        <tissue>Pollen</tissue>
    </source>
</reference>
<gene>
    <name type="primary">Nict1</name>
</gene>
<evidence type="ECO:0000255" key="1">
    <source>
        <dbReference type="PROSITE-ProRule" id="PRU00448"/>
    </source>
</evidence>
<organism>
    <name type="scientific">Nicotiana tabacum</name>
    <name type="common">Common tobacco</name>
    <dbReference type="NCBI Taxonomy" id="4097"/>
    <lineage>
        <taxon>Eukaryota</taxon>
        <taxon>Viridiplantae</taxon>
        <taxon>Streptophyta</taxon>
        <taxon>Embryophyta</taxon>
        <taxon>Tracheophyta</taxon>
        <taxon>Spermatophyta</taxon>
        <taxon>Magnoliopsida</taxon>
        <taxon>eudicotyledons</taxon>
        <taxon>Gunneridae</taxon>
        <taxon>Pentapetalae</taxon>
        <taxon>asterids</taxon>
        <taxon>lamiids</taxon>
        <taxon>Solanales</taxon>
        <taxon>Solanaceae</taxon>
        <taxon>Nicotianoideae</taxon>
        <taxon>Nicotianeae</taxon>
        <taxon>Nicotiana</taxon>
    </lineage>
</organism>